<name>RL27_BORBU</name>
<evidence type="ECO:0000255" key="1">
    <source>
        <dbReference type="HAMAP-Rule" id="MF_00539"/>
    </source>
</evidence>
<evidence type="ECO:0000256" key="2">
    <source>
        <dbReference type="SAM" id="MobiDB-lite"/>
    </source>
</evidence>
<evidence type="ECO:0000305" key="3"/>
<evidence type="ECO:0007829" key="4">
    <source>
        <dbReference type="PDB" id="8FN2"/>
    </source>
</evidence>
<sequence>MATSKSGGSSKNGRDSISKRLGVKRSGGQFVKAGEIIVRQRGTKFHKGKNVGLGRDYTIFALSSGKVEFKTLKGRKYVSIV</sequence>
<gene>
    <name evidence="1" type="primary">rpmA</name>
    <name type="ordered locus">BB_0780</name>
</gene>
<feature type="chain" id="PRO_0000181051" description="Large ribosomal subunit protein bL27">
    <location>
        <begin position="1"/>
        <end position="81"/>
    </location>
</feature>
<feature type="region of interest" description="Disordered" evidence="2">
    <location>
        <begin position="1"/>
        <end position="20"/>
    </location>
</feature>
<feature type="compositionally biased region" description="Polar residues" evidence="2">
    <location>
        <begin position="1"/>
        <end position="11"/>
    </location>
</feature>
<feature type="strand" evidence="4">
    <location>
        <begin position="22"/>
        <end position="25"/>
    </location>
</feature>
<feature type="strand" evidence="4">
    <location>
        <begin position="36"/>
        <end position="39"/>
    </location>
</feature>
<feature type="strand" evidence="4">
    <location>
        <begin position="44"/>
        <end position="47"/>
    </location>
</feature>
<feature type="strand" evidence="4">
    <location>
        <begin position="51"/>
        <end position="53"/>
    </location>
</feature>
<feature type="strand" evidence="4">
    <location>
        <begin position="59"/>
        <end position="72"/>
    </location>
</feature>
<feature type="strand" evidence="4">
    <location>
        <begin position="75"/>
        <end position="81"/>
    </location>
</feature>
<keyword id="KW-0002">3D-structure</keyword>
<keyword id="KW-1185">Reference proteome</keyword>
<keyword id="KW-0687">Ribonucleoprotein</keyword>
<keyword id="KW-0689">Ribosomal protein</keyword>
<reference key="1">
    <citation type="journal article" date="1997" name="Nature">
        <title>Genomic sequence of a Lyme disease spirochaete, Borrelia burgdorferi.</title>
        <authorList>
            <person name="Fraser C.M."/>
            <person name="Casjens S."/>
            <person name="Huang W.M."/>
            <person name="Sutton G.G."/>
            <person name="Clayton R.A."/>
            <person name="Lathigra R."/>
            <person name="White O."/>
            <person name="Ketchum K.A."/>
            <person name="Dodson R.J."/>
            <person name="Hickey E.K."/>
            <person name="Gwinn M.L."/>
            <person name="Dougherty B.A."/>
            <person name="Tomb J.-F."/>
            <person name="Fleischmann R.D."/>
            <person name="Richardson D.L."/>
            <person name="Peterson J.D."/>
            <person name="Kerlavage A.R."/>
            <person name="Quackenbush J."/>
            <person name="Salzberg S.L."/>
            <person name="Hanson M."/>
            <person name="van Vugt R."/>
            <person name="Palmer N."/>
            <person name="Adams M.D."/>
            <person name="Gocayne J.D."/>
            <person name="Weidman J.F."/>
            <person name="Utterback T.R."/>
            <person name="Watthey L."/>
            <person name="McDonald L.A."/>
            <person name="Artiach P."/>
            <person name="Bowman C."/>
            <person name="Garland S.A."/>
            <person name="Fujii C."/>
            <person name="Cotton M.D."/>
            <person name="Horst K."/>
            <person name="Roberts K.M."/>
            <person name="Hatch B."/>
            <person name="Smith H.O."/>
            <person name="Venter J.C."/>
        </authorList>
    </citation>
    <scope>NUCLEOTIDE SEQUENCE [LARGE SCALE GENOMIC DNA]</scope>
    <source>
        <strain>ATCC 35210 / DSM 4680 / CIP 102532 / B31</strain>
    </source>
</reference>
<organism>
    <name type="scientific">Borreliella burgdorferi (strain ATCC 35210 / DSM 4680 / CIP 102532 / B31)</name>
    <name type="common">Borrelia burgdorferi</name>
    <dbReference type="NCBI Taxonomy" id="224326"/>
    <lineage>
        <taxon>Bacteria</taxon>
        <taxon>Pseudomonadati</taxon>
        <taxon>Spirochaetota</taxon>
        <taxon>Spirochaetia</taxon>
        <taxon>Spirochaetales</taxon>
        <taxon>Borreliaceae</taxon>
        <taxon>Borreliella</taxon>
    </lineage>
</organism>
<comment type="similarity">
    <text evidence="1">Belongs to the bacterial ribosomal protein bL27 family.</text>
</comment>
<proteinExistence type="evidence at protein level"/>
<accession>O51721</accession>
<protein>
    <recommendedName>
        <fullName evidence="1">Large ribosomal subunit protein bL27</fullName>
    </recommendedName>
    <alternativeName>
        <fullName evidence="3">50S ribosomal protein L27</fullName>
    </alternativeName>
</protein>
<dbReference type="EMBL" id="AE000783">
    <property type="protein sequence ID" value="AAC67128.1"/>
    <property type="molecule type" value="Genomic_DNA"/>
</dbReference>
<dbReference type="PIR" id="C70197">
    <property type="entry name" value="C70197"/>
</dbReference>
<dbReference type="RefSeq" id="NP_212914.1">
    <property type="nucleotide sequence ID" value="NC_001318.1"/>
</dbReference>
<dbReference type="RefSeq" id="WP_002656482.1">
    <property type="nucleotide sequence ID" value="NC_001318.1"/>
</dbReference>
<dbReference type="PDB" id="8FMW">
    <property type="method" value="EM"/>
    <property type="resolution" value="2.86 A"/>
    <property type="chains" value="AY=8-81"/>
</dbReference>
<dbReference type="PDB" id="8FN2">
    <property type="method" value="EM"/>
    <property type="resolution" value="3.40 A"/>
    <property type="chains" value="Y=8-81"/>
</dbReference>
<dbReference type="PDBsum" id="8FMW"/>
<dbReference type="PDBsum" id="8FN2"/>
<dbReference type="EMDB" id="EMD-29298"/>
<dbReference type="EMDB" id="EMD-29304"/>
<dbReference type="SMR" id="O51721"/>
<dbReference type="STRING" id="224326.BB_0780"/>
<dbReference type="PaxDb" id="224326-BB_0780"/>
<dbReference type="EnsemblBacteria" id="AAC67128">
    <property type="protein sequence ID" value="AAC67128"/>
    <property type="gene ID" value="BB_0780"/>
</dbReference>
<dbReference type="GeneID" id="77265635"/>
<dbReference type="KEGG" id="bbu:BB_0780"/>
<dbReference type="PATRIC" id="fig|224326.49.peg.1172"/>
<dbReference type="HOGENOM" id="CLU_095424_4_1_12"/>
<dbReference type="OrthoDB" id="9803474at2"/>
<dbReference type="Proteomes" id="UP000001807">
    <property type="component" value="Chromosome"/>
</dbReference>
<dbReference type="GO" id="GO:0022625">
    <property type="term" value="C:cytosolic large ribosomal subunit"/>
    <property type="evidence" value="ECO:0007669"/>
    <property type="project" value="TreeGrafter"/>
</dbReference>
<dbReference type="GO" id="GO:0003735">
    <property type="term" value="F:structural constituent of ribosome"/>
    <property type="evidence" value="ECO:0007669"/>
    <property type="project" value="InterPro"/>
</dbReference>
<dbReference type="GO" id="GO:0006412">
    <property type="term" value="P:translation"/>
    <property type="evidence" value="ECO:0007669"/>
    <property type="project" value="UniProtKB-UniRule"/>
</dbReference>
<dbReference type="FunFam" id="2.40.50.100:FF:000020">
    <property type="entry name" value="50S ribosomal protein L27"/>
    <property type="match status" value="1"/>
</dbReference>
<dbReference type="Gene3D" id="2.40.50.100">
    <property type="match status" value="1"/>
</dbReference>
<dbReference type="HAMAP" id="MF_00539">
    <property type="entry name" value="Ribosomal_bL27"/>
    <property type="match status" value="1"/>
</dbReference>
<dbReference type="InterPro" id="IPR001684">
    <property type="entry name" value="Ribosomal_bL27"/>
</dbReference>
<dbReference type="InterPro" id="IPR018261">
    <property type="entry name" value="Ribosomal_bL27_CS"/>
</dbReference>
<dbReference type="NCBIfam" id="TIGR00062">
    <property type="entry name" value="L27"/>
    <property type="match status" value="1"/>
</dbReference>
<dbReference type="PANTHER" id="PTHR15893:SF0">
    <property type="entry name" value="LARGE RIBOSOMAL SUBUNIT PROTEIN BL27M"/>
    <property type="match status" value="1"/>
</dbReference>
<dbReference type="PANTHER" id="PTHR15893">
    <property type="entry name" value="RIBOSOMAL PROTEIN L27"/>
    <property type="match status" value="1"/>
</dbReference>
<dbReference type="Pfam" id="PF01016">
    <property type="entry name" value="Ribosomal_L27"/>
    <property type="match status" value="1"/>
</dbReference>
<dbReference type="PRINTS" id="PR00063">
    <property type="entry name" value="RIBOSOMALL27"/>
</dbReference>
<dbReference type="SUPFAM" id="SSF110324">
    <property type="entry name" value="Ribosomal L27 protein-like"/>
    <property type="match status" value="1"/>
</dbReference>
<dbReference type="PROSITE" id="PS00831">
    <property type="entry name" value="RIBOSOMAL_L27"/>
    <property type="match status" value="1"/>
</dbReference>